<dbReference type="EC" id="5.3.1.12" evidence="1"/>
<dbReference type="EMBL" id="AM920689">
    <property type="protein sequence ID" value="CAP53699.1"/>
    <property type="molecule type" value="Genomic_DNA"/>
</dbReference>
<dbReference type="SMR" id="B0RZ13"/>
<dbReference type="KEGG" id="xca:xcc-b100_4329"/>
<dbReference type="HOGENOM" id="CLU_044465_0_0_6"/>
<dbReference type="UniPathway" id="UPA00246"/>
<dbReference type="Proteomes" id="UP000001188">
    <property type="component" value="Chromosome"/>
</dbReference>
<dbReference type="GO" id="GO:0008880">
    <property type="term" value="F:glucuronate isomerase activity"/>
    <property type="evidence" value="ECO:0007669"/>
    <property type="project" value="UniProtKB-UniRule"/>
</dbReference>
<dbReference type="GO" id="GO:0019698">
    <property type="term" value="P:D-galacturonate catabolic process"/>
    <property type="evidence" value="ECO:0007669"/>
    <property type="project" value="TreeGrafter"/>
</dbReference>
<dbReference type="GO" id="GO:0042840">
    <property type="term" value="P:D-glucuronate catabolic process"/>
    <property type="evidence" value="ECO:0007669"/>
    <property type="project" value="TreeGrafter"/>
</dbReference>
<dbReference type="Gene3D" id="3.20.20.140">
    <property type="entry name" value="Metal-dependent hydrolases"/>
    <property type="match status" value="1"/>
</dbReference>
<dbReference type="Gene3D" id="1.10.2020.10">
    <property type="entry name" value="uronate isomerase, domain 2, chain A"/>
    <property type="match status" value="1"/>
</dbReference>
<dbReference type="HAMAP" id="MF_00675">
    <property type="entry name" value="UxaC"/>
    <property type="match status" value="1"/>
</dbReference>
<dbReference type="InterPro" id="IPR032466">
    <property type="entry name" value="Metal_Hydrolase"/>
</dbReference>
<dbReference type="InterPro" id="IPR003766">
    <property type="entry name" value="Uronate_isomerase"/>
</dbReference>
<dbReference type="NCBIfam" id="NF002794">
    <property type="entry name" value="PRK02925.1"/>
    <property type="match status" value="1"/>
</dbReference>
<dbReference type="PANTHER" id="PTHR30068">
    <property type="entry name" value="URONATE ISOMERASE"/>
    <property type="match status" value="1"/>
</dbReference>
<dbReference type="PANTHER" id="PTHR30068:SF4">
    <property type="entry name" value="URONATE ISOMERASE"/>
    <property type="match status" value="1"/>
</dbReference>
<dbReference type="Pfam" id="PF02614">
    <property type="entry name" value="UxaC"/>
    <property type="match status" value="1"/>
</dbReference>
<dbReference type="SUPFAM" id="SSF51556">
    <property type="entry name" value="Metallo-dependent hydrolases"/>
    <property type="match status" value="1"/>
</dbReference>
<proteinExistence type="inferred from homology"/>
<comment type="catalytic activity">
    <reaction evidence="1">
        <text>D-glucuronate = D-fructuronate</text>
        <dbReference type="Rhea" id="RHEA:13049"/>
        <dbReference type="ChEBI" id="CHEBI:58720"/>
        <dbReference type="ChEBI" id="CHEBI:59863"/>
        <dbReference type="EC" id="5.3.1.12"/>
    </reaction>
</comment>
<comment type="catalytic activity">
    <reaction evidence="1">
        <text>aldehydo-D-galacturonate = keto-D-tagaturonate</text>
        <dbReference type="Rhea" id="RHEA:27702"/>
        <dbReference type="ChEBI" id="CHEBI:12952"/>
        <dbReference type="ChEBI" id="CHEBI:17886"/>
        <dbReference type="EC" id="5.3.1.12"/>
    </reaction>
</comment>
<comment type="pathway">
    <text evidence="1">Carbohydrate metabolism; pentose and glucuronate interconversion.</text>
</comment>
<comment type="similarity">
    <text evidence="1">Belongs to the metallo-dependent hydrolases superfamily. Uronate isomerase family.</text>
</comment>
<feature type="chain" id="PRO_1000131614" description="Uronate isomerase">
    <location>
        <begin position="1"/>
        <end position="471"/>
    </location>
</feature>
<accession>B0RZ13</accession>
<reference key="1">
    <citation type="journal article" date="2008" name="J. Biotechnol.">
        <title>The genome of Xanthomonas campestris pv. campestris B100 and its use for the reconstruction of metabolic pathways involved in xanthan biosynthesis.</title>
        <authorList>
            <person name="Vorhoelter F.-J."/>
            <person name="Schneiker S."/>
            <person name="Goesmann A."/>
            <person name="Krause L."/>
            <person name="Bekel T."/>
            <person name="Kaiser O."/>
            <person name="Linke B."/>
            <person name="Patschkowski T."/>
            <person name="Rueckert C."/>
            <person name="Schmid J."/>
            <person name="Sidhu V.K."/>
            <person name="Sieber V."/>
            <person name="Tauch A."/>
            <person name="Watt S.A."/>
            <person name="Weisshaar B."/>
            <person name="Becker A."/>
            <person name="Niehaus K."/>
            <person name="Puehler A."/>
        </authorList>
    </citation>
    <scope>NUCLEOTIDE SEQUENCE [LARGE SCALE GENOMIC DNA]</scope>
    <source>
        <strain>B100</strain>
    </source>
</reference>
<protein>
    <recommendedName>
        <fullName evidence="1">Uronate isomerase</fullName>
        <ecNumber evidence="1">5.3.1.12</ecNumber>
    </recommendedName>
    <alternativeName>
        <fullName evidence="1">Glucuronate isomerase</fullName>
    </alternativeName>
    <alternativeName>
        <fullName evidence="1">Uronic isomerase</fullName>
    </alternativeName>
</protein>
<keyword id="KW-0413">Isomerase</keyword>
<organism>
    <name type="scientific">Xanthomonas campestris pv. campestris (strain B100)</name>
    <dbReference type="NCBI Taxonomy" id="509169"/>
    <lineage>
        <taxon>Bacteria</taxon>
        <taxon>Pseudomonadati</taxon>
        <taxon>Pseudomonadota</taxon>
        <taxon>Gammaproteobacteria</taxon>
        <taxon>Lysobacterales</taxon>
        <taxon>Lysobacteraceae</taxon>
        <taxon>Xanthomonas</taxon>
    </lineage>
</organism>
<gene>
    <name evidence="1" type="primary">uxaC</name>
    <name type="ordered locus">xcc-b100_4329</name>
</gene>
<name>UXAC_XANCB</name>
<evidence type="ECO:0000255" key="1">
    <source>
        <dbReference type="HAMAP-Rule" id="MF_00675"/>
    </source>
</evidence>
<sequence>MPTPLILHDDRLLPADPATRAIARRLYAQTAALPIISPHGHTDPAWFATDAPFANATELLLVPDHYVFRMLYSQGIDLDQLGIPHADGSRAPVDPREAWRVFASQFALLRGTPSALWLNHVFHQVFDLRIRLDAGSADHYYDHITAALQTPAFRPRALFERFNIEVIATTESPLDTLEHHATIRDSGWSGRVLTAYRPDAVVDPEHEQFASALQQFGALTGEDVMQWPGYLRAHRQRRAFFAAAGATSTDHGHPSAATADLSPAEAQRLFDTVVRGQATPAQAELFRAQVLTEMAAMSVDDGLVMQLHPGCFRNHNRALFERYGRDKGADIPMRTDYVHALKPLLDRFGNDPRFRLIVFTLDETSYSRELAPLAGHYPALLLGPAWWFHDAPEGMWRFREQTLASAGFYNTVGFNDDTRAFLSIPARHDVARRVDSAFLAKLVAEHRLDEDEAMEVAIDLAYRLPKQAYKL</sequence>